<organism>
    <name type="scientific">Emericella nidulans (strain FGSC A4 / ATCC 38163 / CBS 112.46 / NRRL 194 / M139)</name>
    <name type="common">Aspergillus nidulans</name>
    <dbReference type="NCBI Taxonomy" id="227321"/>
    <lineage>
        <taxon>Eukaryota</taxon>
        <taxon>Fungi</taxon>
        <taxon>Dikarya</taxon>
        <taxon>Ascomycota</taxon>
        <taxon>Pezizomycotina</taxon>
        <taxon>Eurotiomycetes</taxon>
        <taxon>Eurotiomycetidae</taxon>
        <taxon>Eurotiales</taxon>
        <taxon>Aspergillaceae</taxon>
        <taxon>Aspergillus</taxon>
        <taxon>Aspergillus subgen. Nidulantes</taxon>
    </lineage>
</organism>
<keyword id="KW-0010">Activator</keyword>
<keyword id="KW-0156">Chromatin regulator</keyword>
<keyword id="KW-0227">DNA damage</keyword>
<keyword id="KW-0234">DNA repair</keyword>
<keyword id="KW-0539">Nucleus</keyword>
<keyword id="KW-1185">Reference proteome</keyword>
<keyword id="KW-0804">Transcription</keyword>
<keyword id="KW-0805">Transcription regulation</keyword>
<gene>
    <name type="primary">swc4</name>
    <name type="ORF">AN4445</name>
</gene>
<dbReference type="EMBL" id="AACD01000077">
    <property type="protein sequence ID" value="EAA60210.1"/>
    <property type="molecule type" value="Genomic_DNA"/>
</dbReference>
<dbReference type="EMBL" id="BN001303">
    <property type="protein sequence ID" value="CBF77504.1"/>
    <property type="molecule type" value="Genomic_DNA"/>
</dbReference>
<dbReference type="RefSeq" id="XP_662049.1">
    <property type="nucleotide sequence ID" value="XM_656957.1"/>
</dbReference>
<dbReference type="SMR" id="Q5B4T5"/>
<dbReference type="BioGRID" id="1953018">
    <property type="interactions" value="1"/>
</dbReference>
<dbReference type="FunCoup" id="Q5B4T5">
    <property type="interactions" value="915"/>
</dbReference>
<dbReference type="STRING" id="227321.Q5B4T5"/>
<dbReference type="EnsemblFungi" id="CBF77504">
    <property type="protein sequence ID" value="CBF77504"/>
    <property type="gene ID" value="ANIA_04445"/>
</dbReference>
<dbReference type="KEGG" id="ani:ANIA_04445"/>
<dbReference type="eggNOG" id="KOG2656">
    <property type="taxonomic scope" value="Eukaryota"/>
</dbReference>
<dbReference type="HOGENOM" id="CLU_018539_3_1_1"/>
<dbReference type="InParanoid" id="Q5B4T5"/>
<dbReference type="OMA" id="GNTTMYQ"/>
<dbReference type="OrthoDB" id="19740at2759"/>
<dbReference type="Proteomes" id="UP000000560">
    <property type="component" value="Chromosome III"/>
</dbReference>
<dbReference type="GO" id="GO:0035267">
    <property type="term" value="C:NuA4 histone acetyltransferase complex"/>
    <property type="evidence" value="ECO:0000318"/>
    <property type="project" value="GO_Central"/>
</dbReference>
<dbReference type="GO" id="GO:0000812">
    <property type="term" value="C:Swr1 complex"/>
    <property type="evidence" value="ECO:0000318"/>
    <property type="project" value="GO_Central"/>
</dbReference>
<dbReference type="GO" id="GO:0003714">
    <property type="term" value="F:transcription corepressor activity"/>
    <property type="evidence" value="ECO:0000318"/>
    <property type="project" value="GO_Central"/>
</dbReference>
<dbReference type="GO" id="GO:0006338">
    <property type="term" value="P:chromatin remodeling"/>
    <property type="evidence" value="ECO:0007669"/>
    <property type="project" value="InterPro"/>
</dbReference>
<dbReference type="GO" id="GO:0006281">
    <property type="term" value="P:DNA repair"/>
    <property type="evidence" value="ECO:0007669"/>
    <property type="project" value="UniProtKB-KW"/>
</dbReference>
<dbReference type="GO" id="GO:0000122">
    <property type="term" value="P:negative regulation of transcription by RNA polymerase II"/>
    <property type="evidence" value="ECO:0000318"/>
    <property type="project" value="GO_Central"/>
</dbReference>
<dbReference type="FunFam" id="1.10.10.60:FF:000432">
    <property type="entry name" value="SWR1-complex protein 4"/>
    <property type="match status" value="1"/>
</dbReference>
<dbReference type="Gene3D" id="1.10.10.60">
    <property type="entry name" value="Homeodomain-like"/>
    <property type="match status" value="1"/>
</dbReference>
<dbReference type="InterPro" id="IPR032563">
    <property type="entry name" value="DAMP1_SANT-like"/>
</dbReference>
<dbReference type="InterPro" id="IPR001005">
    <property type="entry name" value="SANT/Myb"/>
</dbReference>
<dbReference type="InterPro" id="IPR027109">
    <property type="entry name" value="Swc4/Dmap1"/>
</dbReference>
<dbReference type="PANTHER" id="PTHR12855:SF10">
    <property type="entry name" value="DNA METHYLTRANSFERASE 1-ASSOCIATED PROTEIN 1"/>
    <property type="match status" value="1"/>
</dbReference>
<dbReference type="PANTHER" id="PTHR12855">
    <property type="entry name" value="DNA METHYLTRANSFERASE 1-ASSOCIATED PROTEIN 1 FAMILY MEMBER"/>
    <property type="match status" value="1"/>
</dbReference>
<dbReference type="Pfam" id="PF16282">
    <property type="entry name" value="SANT_DAMP1_like"/>
    <property type="match status" value="1"/>
</dbReference>
<feature type="chain" id="PRO_0000076340" description="SWR1-complex protein 4">
    <location>
        <begin position="1"/>
        <end position="586"/>
    </location>
</feature>
<feature type="domain" description="SANT">
    <location>
        <begin position="137"/>
        <end position="190"/>
    </location>
</feature>
<feature type="region of interest" description="Disordered" evidence="2">
    <location>
        <begin position="1"/>
        <end position="30"/>
    </location>
</feature>
<feature type="region of interest" description="Disordered" evidence="2">
    <location>
        <begin position="325"/>
        <end position="383"/>
    </location>
</feature>
<feature type="region of interest" description="Disordered" evidence="2">
    <location>
        <begin position="486"/>
        <end position="586"/>
    </location>
</feature>
<feature type="compositionally biased region" description="Basic and acidic residues" evidence="2">
    <location>
        <begin position="1"/>
        <end position="10"/>
    </location>
</feature>
<feature type="compositionally biased region" description="Low complexity" evidence="2">
    <location>
        <begin position="363"/>
        <end position="383"/>
    </location>
</feature>
<feature type="compositionally biased region" description="Basic and acidic residues" evidence="2">
    <location>
        <begin position="486"/>
        <end position="507"/>
    </location>
</feature>
<feature type="compositionally biased region" description="Polar residues" evidence="2">
    <location>
        <begin position="527"/>
        <end position="562"/>
    </location>
</feature>
<accession>Q5B4T5</accession>
<accession>C8V8J5</accession>
<reference key="1">
    <citation type="journal article" date="2005" name="Nature">
        <title>Sequencing of Aspergillus nidulans and comparative analysis with A. fumigatus and A. oryzae.</title>
        <authorList>
            <person name="Galagan J.E."/>
            <person name="Calvo S.E."/>
            <person name="Cuomo C."/>
            <person name="Ma L.-J."/>
            <person name="Wortman J.R."/>
            <person name="Batzoglou S."/>
            <person name="Lee S.-I."/>
            <person name="Bastuerkmen M."/>
            <person name="Spevak C.C."/>
            <person name="Clutterbuck J."/>
            <person name="Kapitonov V."/>
            <person name="Jurka J."/>
            <person name="Scazzocchio C."/>
            <person name="Farman M.L."/>
            <person name="Butler J."/>
            <person name="Purcell S."/>
            <person name="Harris S."/>
            <person name="Braus G.H."/>
            <person name="Draht O."/>
            <person name="Busch S."/>
            <person name="D'Enfert C."/>
            <person name="Bouchier C."/>
            <person name="Goldman G.H."/>
            <person name="Bell-Pedersen D."/>
            <person name="Griffiths-Jones S."/>
            <person name="Doonan J.H."/>
            <person name="Yu J."/>
            <person name="Vienken K."/>
            <person name="Pain A."/>
            <person name="Freitag M."/>
            <person name="Selker E.U."/>
            <person name="Archer D.B."/>
            <person name="Penalva M.A."/>
            <person name="Oakley B.R."/>
            <person name="Momany M."/>
            <person name="Tanaka T."/>
            <person name="Kumagai T."/>
            <person name="Asai K."/>
            <person name="Machida M."/>
            <person name="Nierman W.C."/>
            <person name="Denning D.W."/>
            <person name="Caddick M.X."/>
            <person name="Hynes M."/>
            <person name="Paoletti M."/>
            <person name="Fischer R."/>
            <person name="Miller B.L."/>
            <person name="Dyer P.S."/>
            <person name="Sachs M.S."/>
            <person name="Osmani S.A."/>
            <person name="Birren B.W."/>
        </authorList>
    </citation>
    <scope>NUCLEOTIDE SEQUENCE [LARGE SCALE GENOMIC DNA]</scope>
    <source>
        <strain>FGSC A4 / ATCC 38163 / CBS 112.46 / NRRL 194 / M139</strain>
    </source>
</reference>
<reference key="2">
    <citation type="journal article" date="2009" name="Fungal Genet. Biol.">
        <title>The 2008 update of the Aspergillus nidulans genome annotation: a community effort.</title>
        <authorList>
            <person name="Wortman J.R."/>
            <person name="Gilsenan J.M."/>
            <person name="Joardar V."/>
            <person name="Deegan J."/>
            <person name="Clutterbuck J."/>
            <person name="Andersen M.R."/>
            <person name="Archer D."/>
            <person name="Bencina M."/>
            <person name="Braus G."/>
            <person name="Coutinho P."/>
            <person name="von Dohren H."/>
            <person name="Doonan J."/>
            <person name="Driessen A.J."/>
            <person name="Durek P."/>
            <person name="Espeso E."/>
            <person name="Fekete E."/>
            <person name="Flipphi M."/>
            <person name="Estrada C.G."/>
            <person name="Geysens S."/>
            <person name="Goldman G."/>
            <person name="de Groot P.W."/>
            <person name="Hansen K."/>
            <person name="Harris S.D."/>
            <person name="Heinekamp T."/>
            <person name="Helmstaedt K."/>
            <person name="Henrissat B."/>
            <person name="Hofmann G."/>
            <person name="Homan T."/>
            <person name="Horio T."/>
            <person name="Horiuchi H."/>
            <person name="James S."/>
            <person name="Jones M."/>
            <person name="Karaffa L."/>
            <person name="Karanyi Z."/>
            <person name="Kato M."/>
            <person name="Keller N."/>
            <person name="Kelly D.E."/>
            <person name="Kiel J.A."/>
            <person name="Kim J.M."/>
            <person name="van der Klei I.J."/>
            <person name="Klis F.M."/>
            <person name="Kovalchuk A."/>
            <person name="Krasevec N."/>
            <person name="Kubicek C.P."/>
            <person name="Liu B."/>
            <person name="Maccabe A."/>
            <person name="Meyer V."/>
            <person name="Mirabito P."/>
            <person name="Miskei M."/>
            <person name="Mos M."/>
            <person name="Mullins J."/>
            <person name="Nelson D.R."/>
            <person name="Nielsen J."/>
            <person name="Oakley B.R."/>
            <person name="Osmani S.A."/>
            <person name="Pakula T."/>
            <person name="Paszewski A."/>
            <person name="Paulsen I."/>
            <person name="Pilsyk S."/>
            <person name="Pocsi I."/>
            <person name="Punt P.J."/>
            <person name="Ram A.F."/>
            <person name="Ren Q."/>
            <person name="Robellet X."/>
            <person name="Robson G."/>
            <person name="Seiboth B."/>
            <person name="van Solingen P."/>
            <person name="Specht T."/>
            <person name="Sun J."/>
            <person name="Taheri-Talesh N."/>
            <person name="Takeshita N."/>
            <person name="Ussery D."/>
            <person name="vanKuyk P.A."/>
            <person name="Visser H."/>
            <person name="van de Vondervoort P.J."/>
            <person name="de Vries R.P."/>
            <person name="Walton J."/>
            <person name="Xiang X."/>
            <person name="Xiong Y."/>
            <person name="Zeng A.P."/>
            <person name="Brandt B.W."/>
            <person name="Cornell M.J."/>
            <person name="van den Hondel C.A."/>
            <person name="Visser J."/>
            <person name="Oliver S.G."/>
            <person name="Turner G."/>
        </authorList>
    </citation>
    <scope>GENOME REANNOTATION</scope>
    <source>
        <strain>FGSC A4 / ATCC 38163 / CBS 112.46 / NRRL 194 / M139</strain>
    </source>
</reference>
<name>SWC4_EMENI</name>
<proteinExistence type="inferred from homology"/>
<protein>
    <recommendedName>
        <fullName>SWR1-complex protein 4</fullName>
    </recommendedName>
</protein>
<comment type="function">
    <text evidence="1">Component of the SWR1 complex which mediates the ATP-dependent exchange of histone H2A for the H2A variant HZT1 leading to transcriptional regulation of selected genes by chromatin remodeling. Component of the NuA4 histone acetyltransferase complex which is involved in transcriptional activation of selected genes principally by acetylation of nucleosomal histone H4 and H2A. The NuA4 complex is also involved in DNA repair (By similarity).</text>
</comment>
<comment type="subunit">
    <text evidence="1">Component of the SWR1 chromatin-remodeling complex and of the NuA4 histone acetyltransferase complex.</text>
</comment>
<comment type="subcellular location">
    <subcellularLocation>
        <location evidence="1">Nucleus</location>
    </subcellularLocation>
</comment>
<comment type="similarity">
    <text evidence="3">Belongs to the SWC4 family.</text>
</comment>
<evidence type="ECO:0000250" key="1"/>
<evidence type="ECO:0000256" key="2">
    <source>
        <dbReference type="SAM" id="MobiDB-lite"/>
    </source>
</evidence>
<evidence type="ECO:0000305" key="3"/>
<sequence>MAAADVRDMLDLPAEGQPRPHKKQKVVEKRPEGITRELFALLGERAPPIAINENRYKGRPKWQTKARVRPCARSDDLVLRHWQREPESTNIPAIEDTRAEGETKEQGEHKTADREYPFAKYNIKLKFSNRYTTDEYNRHLRSEDWSREETDYLMDLVEEYDLRWVVIADRYDFQPQRVDNTEETSSALVPSKQFRTMEQMKARYYFVAASMLALEHPPSEMSEAEFDLHERMMKFDPERERHRKELAALQLNRTADEVREETVLLEELKRITANEQEFVTERRELYSRLDVPISVSNATNYHNSQGLSHLLQTLLQADKSKKRRSILGPDGIAPTSGGQTPTIPNAPGSARDSSRADTPNGGTTQSTTTKKAAAAANREAAQQAIRTLTPAEEARYGVQHHDRLAPGVQFRSDRAQKLTQAKSHVQTQKLASALAELEVPLRLFMPTERVVKEFEKLIHSVNLLLDARKVAEKVESEIRVLEAAKEERERKAKELREKDKPEVKSEQQDNDVPIPPAPAPVAAGDASQTGQPAKTNEGQAELNGSSTTNNVADSEPSTQEQEGVSHKRSASVLSNGSDKSSKRQKK</sequence>